<feature type="chain" id="PRO_0000131238" description="Large ribosomal subunit protein uL18">
    <location>
        <begin position="1"/>
        <end position="118"/>
    </location>
</feature>
<organism>
    <name type="scientific">Campylobacter jejuni (strain RM1221)</name>
    <dbReference type="NCBI Taxonomy" id="195099"/>
    <lineage>
        <taxon>Bacteria</taxon>
        <taxon>Pseudomonadati</taxon>
        <taxon>Campylobacterota</taxon>
        <taxon>Epsilonproteobacteria</taxon>
        <taxon>Campylobacterales</taxon>
        <taxon>Campylobacteraceae</taxon>
        <taxon>Campylobacter</taxon>
    </lineage>
</organism>
<accession>Q5HSA6</accession>
<evidence type="ECO:0000255" key="1">
    <source>
        <dbReference type="HAMAP-Rule" id="MF_01337"/>
    </source>
</evidence>
<evidence type="ECO:0000305" key="2"/>
<comment type="function">
    <text evidence="1">This is one of the proteins that bind and probably mediate the attachment of the 5S RNA into the large ribosomal subunit, where it forms part of the central protuberance.</text>
</comment>
<comment type="subunit">
    <text evidence="1">Part of the 50S ribosomal subunit; part of the 5S rRNA/L5/L18/L25 subcomplex. Contacts the 5S and 23S rRNAs.</text>
</comment>
<comment type="similarity">
    <text evidence="1">Belongs to the universal ribosomal protein uL18 family.</text>
</comment>
<reference key="1">
    <citation type="journal article" date="2005" name="PLoS Biol.">
        <title>Major structural differences and novel potential virulence mechanisms from the genomes of multiple Campylobacter species.</title>
        <authorList>
            <person name="Fouts D.E."/>
            <person name="Mongodin E.F."/>
            <person name="Mandrell R.E."/>
            <person name="Miller W.G."/>
            <person name="Rasko D.A."/>
            <person name="Ravel J."/>
            <person name="Brinkac L.M."/>
            <person name="DeBoy R.T."/>
            <person name="Parker C.T."/>
            <person name="Daugherty S.C."/>
            <person name="Dodson R.J."/>
            <person name="Durkin A.S."/>
            <person name="Madupu R."/>
            <person name="Sullivan S.A."/>
            <person name="Shetty J.U."/>
            <person name="Ayodeji M.A."/>
            <person name="Shvartsbeyn A."/>
            <person name="Schatz M.C."/>
            <person name="Badger J.H."/>
            <person name="Fraser C.M."/>
            <person name="Nelson K.E."/>
        </authorList>
    </citation>
    <scope>NUCLEOTIDE SEQUENCE [LARGE SCALE GENOMIC DNA]</scope>
    <source>
        <strain>RM1221</strain>
    </source>
</reference>
<sequence length="118" mass="13239">MRANVLKRKLTLRIKRKKRIRAKISGCENFPRISVFKSNRTLYIQAIDDVKAVTLAAVDGRKLGVKANKEGAKKIAAEFAKTLKAKKIEQAVFDRNGYVYHGVIAALAESLRENGIRL</sequence>
<keyword id="KW-0687">Ribonucleoprotein</keyword>
<keyword id="KW-0689">Ribosomal protein</keyword>
<keyword id="KW-0694">RNA-binding</keyword>
<keyword id="KW-0699">rRNA-binding</keyword>
<gene>
    <name evidence="1" type="primary">rplR</name>
    <name type="ordered locus">CJE1859</name>
</gene>
<name>RL18_CAMJR</name>
<proteinExistence type="inferred from homology"/>
<dbReference type="EMBL" id="CP000025">
    <property type="protein sequence ID" value="AAW36281.1"/>
    <property type="molecule type" value="Genomic_DNA"/>
</dbReference>
<dbReference type="RefSeq" id="WP_002785535.1">
    <property type="nucleotide sequence ID" value="NC_003912.7"/>
</dbReference>
<dbReference type="SMR" id="Q5HSA6"/>
<dbReference type="KEGG" id="cjr:CJE1859"/>
<dbReference type="HOGENOM" id="CLU_098841_0_1_7"/>
<dbReference type="GO" id="GO:0022625">
    <property type="term" value="C:cytosolic large ribosomal subunit"/>
    <property type="evidence" value="ECO:0007669"/>
    <property type="project" value="TreeGrafter"/>
</dbReference>
<dbReference type="GO" id="GO:0008097">
    <property type="term" value="F:5S rRNA binding"/>
    <property type="evidence" value="ECO:0007669"/>
    <property type="project" value="TreeGrafter"/>
</dbReference>
<dbReference type="GO" id="GO:0003735">
    <property type="term" value="F:structural constituent of ribosome"/>
    <property type="evidence" value="ECO:0007669"/>
    <property type="project" value="InterPro"/>
</dbReference>
<dbReference type="GO" id="GO:0006412">
    <property type="term" value="P:translation"/>
    <property type="evidence" value="ECO:0007669"/>
    <property type="project" value="UniProtKB-UniRule"/>
</dbReference>
<dbReference type="CDD" id="cd00432">
    <property type="entry name" value="Ribosomal_L18_L5e"/>
    <property type="match status" value="1"/>
</dbReference>
<dbReference type="Gene3D" id="3.30.420.100">
    <property type="match status" value="1"/>
</dbReference>
<dbReference type="HAMAP" id="MF_01337_B">
    <property type="entry name" value="Ribosomal_uL18_B"/>
    <property type="match status" value="1"/>
</dbReference>
<dbReference type="InterPro" id="IPR004389">
    <property type="entry name" value="Ribosomal_uL18_bac-type"/>
</dbReference>
<dbReference type="InterPro" id="IPR005484">
    <property type="entry name" value="Ribosomal_uL18_bac/euk"/>
</dbReference>
<dbReference type="NCBIfam" id="TIGR00060">
    <property type="entry name" value="L18_bact"/>
    <property type="match status" value="1"/>
</dbReference>
<dbReference type="PANTHER" id="PTHR12899">
    <property type="entry name" value="39S RIBOSOMAL PROTEIN L18, MITOCHONDRIAL"/>
    <property type="match status" value="1"/>
</dbReference>
<dbReference type="PANTHER" id="PTHR12899:SF3">
    <property type="entry name" value="LARGE RIBOSOMAL SUBUNIT PROTEIN UL18M"/>
    <property type="match status" value="1"/>
</dbReference>
<dbReference type="Pfam" id="PF00861">
    <property type="entry name" value="Ribosomal_L18p"/>
    <property type="match status" value="1"/>
</dbReference>
<dbReference type="SUPFAM" id="SSF53137">
    <property type="entry name" value="Translational machinery components"/>
    <property type="match status" value="1"/>
</dbReference>
<protein>
    <recommendedName>
        <fullName evidence="1">Large ribosomal subunit protein uL18</fullName>
    </recommendedName>
    <alternativeName>
        <fullName evidence="2">50S ribosomal protein L18</fullName>
    </alternativeName>
</protein>